<proteinExistence type="inferred from homology"/>
<organism>
    <name type="scientific">Paraburkholderia xenovorans (strain LB400)</name>
    <dbReference type="NCBI Taxonomy" id="266265"/>
    <lineage>
        <taxon>Bacteria</taxon>
        <taxon>Pseudomonadati</taxon>
        <taxon>Pseudomonadota</taxon>
        <taxon>Betaproteobacteria</taxon>
        <taxon>Burkholderiales</taxon>
        <taxon>Burkholderiaceae</taxon>
        <taxon>Paraburkholderia</taxon>
    </lineage>
</organism>
<accession>Q143Y9</accession>
<dbReference type="EC" id="3.4.11.1" evidence="1"/>
<dbReference type="EC" id="3.4.11.10" evidence="1"/>
<dbReference type="EMBL" id="CP000270">
    <property type="protein sequence ID" value="ABE29350.1"/>
    <property type="molecule type" value="Genomic_DNA"/>
</dbReference>
<dbReference type="RefSeq" id="WP_007175950.1">
    <property type="nucleotide sequence ID" value="NC_007951.1"/>
</dbReference>
<dbReference type="SMR" id="Q143Y9"/>
<dbReference type="STRING" id="266265.Bxe_A3638"/>
<dbReference type="MEROPS" id="M17.003"/>
<dbReference type="KEGG" id="bxb:DR64_1331"/>
<dbReference type="KEGG" id="bxe:Bxe_A3638"/>
<dbReference type="eggNOG" id="COG0260">
    <property type="taxonomic scope" value="Bacteria"/>
</dbReference>
<dbReference type="OrthoDB" id="9809354at2"/>
<dbReference type="Proteomes" id="UP000001817">
    <property type="component" value="Chromosome 1"/>
</dbReference>
<dbReference type="GO" id="GO:0005737">
    <property type="term" value="C:cytoplasm"/>
    <property type="evidence" value="ECO:0007669"/>
    <property type="project" value="UniProtKB-SubCell"/>
</dbReference>
<dbReference type="GO" id="GO:0030145">
    <property type="term" value="F:manganese ion binding"/>
    <property type="evidence" value="ECO:0007669"/>
    <property type="project" value="UniProtKB-UniRule"/>
</dbReference>
<dbReference type="GO" id="GO:0070006">
    <property type="term" value="F:metalloaminopeptidase activity"/>
    <property type="evidence" value="ECO:0007669"/>
    <property type="project" value="InterPro"/>
</dbReference>
<dbReference type="GO" id="GO:0006508">
    <property type="term" value="P:proteolysis"/>
    <property type="evidence" value="ECO:0007669"/>
    <property type="project" value="UniProtKB-KW"/>
</dbReference>
<dbReference type="CDD" id="cd00433">
    <property type="entry name" value="Peptidase_M17"/>
    <property type="match status" value="1"/>
</dbReference>
<dbReference type="FunFam" id="3.40.630.10:FF:000004">
    <property type="entry name" value="Probable cytosol aminopeptidase"/>
    <property type="match status" value="1"/>
</dbReference>
<dbReference type="Gene3D" id="3.40.220.10">
    <property type="entry name" value="Leucine Aminopeptidase, subunit E, domain 1"/>
    <property type="match status" value="1"/>
</dbReference>
<dbReference type="Gene3D" id="3.40.630.10">
    <property type="entry name" value="Zn peptidases"/>
    <property type="match status" value="1"/>
</dbReference>
<dbReference type="HAMAP" id="MF_00181">
    <property type="entry name" value="Cytosol_peptidase_M17"/>
    <property type="match status" value="1"/>
</dbReference>
<dbReference type="InterPro" id="IPR011356">
    <property type="entry name" value="Leucine_aapep/pepB"/>
</dbReference>
<dbReference type="InterPro" id="IPR043472">
    <property type="entry name" value="Macro_dom-like"/>
</dbReference>
<dbReference type="InterPro" id="IPR000819">
    <property type="entry name" value="Peptidase_M17_C"/>
</dbReference>
<dbReference type="InterPro" id="IPR023042">
    <property type="entry name" value="Peptidase_M17_leu_NH2_pept"/>
</dbReference>
<dbReference type="InterPro" id="IPR008283">
    <property type="entry name" value="Peptidase_M17_N"/>
</dbReference>
<dbReference type="NCBIfam" id="NF002073">
    <property type="entry name" value="PRK00913.1-2"/>
    <property type="match status" value="1"/>
</dbReference>
<dbReference type="NCBIfam" id="NF002074">
    <property type="entry name" value="PRK00913.1-4"/>
    <property type="match status" value="1"/>
</dbReference>
<dbReference type="NCBIfam" id="NF002077">
    <property type="entry name" value="PRK00913.2-4"/>
    <property type="match status" value="1"/>
</dbReference>
<dbReference type="PANTHER" id="PTHR11963:SF23">
    <property type="entry name" value="CYTOSOL AMINOPEPTIDASE"/>
    <property type="match status" value="1"/>
</dbReference>
<dbReference type="PANTHER" id="PTHR11963">
    <property type="entry name" value="LEUCINE AMINOPEPTIDASE-RELATED"/>
    <property type="match status" value="1"/>
</dbReference>
<dbReference type="Pfam" id="PF00883">
    <property type="entry name" value="Peptidase_M17"/>
    <property type="match status" value="1"/>
</dbReference>
<dbReference type="Pfam" id="PF02789">
    <property type="entry name" value="Peptidase_M17_N"/>
    <property type="match status" value="1"/>
</dbReference>
<dbReference type="PRINTS" id="PR00481">
    <property type="entry name" value="LAMNOPPTDASE"/>
</dbReference>
<dbReference type="SUPFAM" id="SSF52949">
    <property type="entry name" value="Macro domain-like"/>
    <property type="match status" value="1"/>
</dbReference>
<dbReference type="SUPFAM" id="SSF53187">
    <property type="entry name" value="Zn-dependent exopeptidases"/>
    <property type="match status" value="1"/>
</dbReference>
<dbReference type="PROSITE" id="PS00631">
    <property type="entry name" value="CYTOSOL_AP"/>
    <property type="match status" value="1"/>
</dbReference>
<comment type="function">
    <text evidence="1">Presumably involved in the processing and regular turnover of intracellular proteins. Catalyzes the removal of unsubstituted N-terminal amino acids from various peptides.</text>
</comment>
<comment type="catalytic activity">
    <reaction evidence="1">
        <text>Release of an N-terminal amino acid, Xaa-|-Yaa-, in which Xaa is preferably Leu, but may be other amino acids including Pro although not Arg or Lys, and Yaa may be Pro. Amino acid amides and methyl esters are also readily hydrolyzed, but rates on arylamides are exceedingly low.</text>
        <dbReference type="EC" id="3.4.11.1"/>
    </reaction>
</comment>
<comment type="catalytic activity">
    <reaction evidence="1">
        <text>Release of an N-terminal amino acid, preferentially leucine, but not glutamic or aspartic acids.</text>
        <dbReference type="EC" id="3.4.11.10"/>
    </reaction>
</comment>
<comment type="cofactor">
    <cofactor evidence="1">
        <name>Mn(2+)</name>
        <dbReference type="ChEBI" id="CHEBI:29035"/>
    </cofactor>
    <text evidence="1">Binds 2 manganese ions per subunit.</text>
</comment>
<comment type="subcellular location">
    <subcellularLocation>
        <location evidence="1">Cytoplasm</location>
    </subcellularLocation>
</comment>
<comment type="similarity">
    <text evidence="1">Belongs to the peptidase M17 family.</text>
</comment>
<name>AMPA_PARXL</name>
<reference key="1">
    <citation type="journal article" date="2006" name="Proc. Natl. Acad. Sci. U.S.A.">
        <title>Burkholderia xenovorans LB400 harbors a multi-replicon, 9.73-Mbp genome shaped for versatility.</title>
        <authorList>
            <person name="Chain P.S.G."/>
            <person name="Denef V.J."/>
            <person name="Konstantinidis K.T."/>
            <person name="Vergez L.M."/>
            <person name="Agullo L."/>
            <person name="Reyes V.L."/>
            <person name="Hauser L."/>
            <person name="Cordova M."/>
            <person name="Gomez L."/>
            <person name="Gonzalez M."/>
            <person name="Land M."/>
            <person name="Lao V."/>
            <person name="Larimer F."/>
            <person name="LiPuma J.J."/>
            <person name="Mahenthiralingam E."/>
            <person name="Malfatti S.A."/>
            <person name="Marx C.J."/>
            <person name="Parnell J.J."/>
            <person name="Ramette A."/>
            <person name="Richardson P."/>
            <person name="Seeger M."/>
            <person name="Smith D."/>
            <person name="Spilker T."/>
            <person name="Sul W.J."/>
            <person name="Tsoi T.V."/>
            <person name="Ulrich L.E."/>
            <person name="Zhulin I.B."/>
            <person name="Tiedje J.M."/>
        </authorList>
    </citation>
    <scope>NUCLEOTIDE SEQUENCE [LARGE SCALE GENOMIC DNA]</scope>
    <source>
        <strain>LB400</strain>
    </source>
</reference>
<sequence length="508" mass="53468">MDFSIKACDWTKGSSNGFLTGKSDCIVIGVFESQTLSGAALEIDAATKGLLTRIIKAGDMDGKAGTTLFLHEVSGIGASRVLLVGLGKQDAFNQKAYGDAARAAWRALLSTKIVQVTFTLAQLPILERSADWAVRAAILALRELTYKFTQMKSKPDTSARALKRIVFSVNTGDEKAAKLAAKQGAALANGMDLTRDLGNLPSNVCTPTYLANTAKKLAKDWKLKVEVLGEKQCEALKMGSFLSVTAGSVEPAQFIVLQYQGGAAKAAPVVLVGKGVTFDTGGISLKPGEGMDEMKYDMCGAGSVLGTLRAVAEMGLKINVVGIIPAVENMPSATATKPGDIVTSMKGLTIEVLNTDAEGRLILCDALTYAERFKPAAVIDIATLTGACIIALGHHNSGLFSKDDALAGELLDASREASDPAWRMPLDDEYQDQLKSNFADLANIGGRPAGSVTAACFLSRFTEAYPWAHLDIAGTAWKSGAAKGATGRPVPLLAQFLIDRAADGRATQ</sequence>
<feature type="chain" id="PRO_1000019902" description="Probable cytosol aminopeptidase">
    <location>
        <begin position="1"/>
        <end position="508"/>
    </location>
</feature>
<feature type="active site" evidence="1">
    <location>
        <position position="286"/>
    </location>
</feature>
<feature type="active site" evidence="1">
    <location>
        <position position="360"/>
    </location>
</feature>
<feature type="binding site" evidence="1">
    <location>
        <position position="274"/>
    </location>
    <ligand>
        <name>Mn(2+)</name>
        <dbReference type="ChEBI" id="CHEBI:29035"/>
        <label>2</label>
    </ligand>
</feature>
<feature type="binding site" evidence="1">
    <location>
        <position position="279"/>
    </location>
    <ligand>
        <name>Mn(2+)</name>
        <dbReference type="ChEBI" id="CHEBI:29035"/>
        <label>1</label>
    </ligand>
</feature>
<feature type="binding site" evidence="1">
    <location>
        <position position="279"/>
    </location>
    <ligand>
        <name>Mn(2+)</name>
        <dbReference type="ChEBI" id="CHEBI:29035"/>
        <label>2</label>
    </ligand>
</feature>
<feature type="binding site" evidence="1">
    <location>
        <position position="297"/>
    </location>
    <ligand>
        <name>Mn(2+)</name>
        <dbReference type="ChEBI" id="CHEBI:29035"/>
        <label>2</label>
    </ligand>
</feature>
<feature type="binding site" evidence="1">
    <location>
        <position position="356"/>
    </location>
    <ligand>
        <name>Mn(2+)</name>
        <dbReference type="ChEBI" id="CHEBI:29035"/>
        <label>1</label>
    </ligand>
</feature>
<feature type="binding site" evidence="1">
    <location>
        <position position="358"/>
    </location>
    <ligand>
        <name>Mn(2+)</name>
        <dbReference type="ChEBI" id="CHEBI:29035"/>
        <label>1</label>
    </ligand>
</feature>
<feature type="binding site" evidence="1">
    <location>
        <position position="358"/>
    </location>
    <ligand>
        <name>Mn(2+)</name>
        <dbReference type="ChEBI" id="CHEBI:29035"/>
        <label>2</label>
    </ligand>
</feature>
<protein>
    <recommendedName>
        <fullName evidence="1">Probable cytosol aminopeptidase</fullName>
        <ecNumber evidence="1">3.4.11.1</ecNumber>
    </recommendedName>
    <alternativeName>
        <fullName evidence="1">Leucine aminopeptidase</fullName>
        <shortName evidence="1">LAP</shortName>
        <ecNumber evidence="1">3.4.11.10</ecNumber>
    </alternativeName>
    <alternativeName>
        <fullName evidence="1">Leucyl aminopeptidase</fullName>
    </alternativeName>
</protein>
<keyword id="KW-0031">Aminopeptidase</keyword>
<keyword id="KW-0963">Cytoplasm</keyword>
<keyword id="KW-0378">Hydrolase</keyword>
<keyword id="KW-0464">Manganese</keyword>
<keyword id="KW-0479">Metal-binding</keyword>
<keyword id="KW-0645">Protease</keyword>
<keyword id="KW-1185">Reference proteome</keyword>
<gene>
    <name evidence="1" type="primary">pepA</name>
    <name type="ordered locus">Bxeno_A0812</name>
    <name type="ORF">Bxe_A3638</name>
</gene>
<evidence type="ECO:0000255" key="1">
    <source>
        <dbReference type="HAMAP-Rule" id="MF_00181"/>
    </source>
</evidence>